<protein>
    <recommendedName>
        <fullName evidence="2">Short transient receptor potential channel 6</fullName>
        <shortName evidence="2">TrpC6</shortName>
    </recommendedName>
</protein>
<evidence type="ECO:0000250" key="1">
    <source>
        <dbReference type="UniProtKB" id="Q61143"/>
    </source>
</evidence>
<evidence type="ECO:0000250" key="2">
    <source>
        <dbReference type="UniProtKB" id="Q9Y210"/>
    </source>
</evidence>
<evidence type="ECO:0000255" key="3"/>
<evidence type="ECO:0000256" key="4">
    <source>
        <dbReference type="SAM" id="MobiDB-lite"/>
    </source>
</evidence>
<evidence type="ECO:0000305" key="5"/>
<name>TRPC6_BOVIN</name>
<proteinExistence type="evidence at transcript level"/>
<feature type="chain" id="PRO_0000215321" description="Short transient receptor potential channel 6">
    <location>
        <begin position="1"/>
        <end position="931"/>
    </location>
</feature>
<feature type="topological domain" description="Cytoplasmic" evidence="5">
    <location>
        <begin position="1"/>
        <end position="406"/>
    </location>
</feature>
<feature type="transmembrane region" description="Helical" evidence="3">
    <location>
        <begin position="407"/>
        <end position="427"/>
    </location>
</feature>
<feature type="topological domain" description="Extracellular" evidence="5">
    <location>
        <begin position="428"/>
        <end position="438"/>
    </location>
</feature>
<feature type="transmembrane region" description="Helical" evidence="3">
    <location>
        <begin position="439"/>
        <end position="459"/>
    </location>
</feature>
<feature type="topological domain" description="Cytoplasmic" evidence="5">
    <location>
        <begin position="460"/>
        <end position="487"/>
    </location>
</feature>
<feature type="transmembrane region" description="Helical" evidence="3">
    <location>
        <begin position="488"/>
        <end position="508"/>
    </location>
</feature>
<feature type="topological domain" description="Extracellular" evidence="5">
    <location>
        <begin position="509"/>
        <end position="521"/>
    </location>
</feature>
<feature type="transmembrane region" description="Helical" evidence="3">
    <location>
        <begin position="522"/>
        <end position="542"/>
    </location>
</feature>
<feature type="topological domain" description="Cytoplasmic" evidence="5">
    <location>
        <begin position="543"/>
        <end position="592"/>
    </location>
</feature>
<feature type="transmembrane region" description="Helical" evidence="3">
    <location>
        <begin position="593"/>
        <end position="613"/>
    </location>
</feature>
<feature type="topological domain" description="Extracellular" evidence="5">
    <location>
        <begin position="614"/>
        <end position="636"/>
    </location>
</feature>
<feature type="transmembrane region" description="Helical" evidence="3">
    <location>
        <begin position="637"/>
        <end position="657"/>
    </location>
</feature>
<feature type="topological domain" description="Cytoplasmic" evidence="5">
    <location>
        <begin position="658"/>
        <end position="674"/>
    </location>
</feature>
<feature type="transmembrane region" description="Helical" evidence="3">
    <location>
        <begin position="675"/>
        <end position="695"/>
    </location>
</feature>
<feature type="topological domain" description="Extracellular" evidence="5">
    <location>
        <begin position="696"/>
        <end position="706"/>
    </location>
</feature>
<feature type="transmembrane region" description="Helical" evidence="3">
    <location>
        <begin position="707"/>
        <end position="727"/>
    </location>
</feature>
<feature type="topological domain" description="Cytoplasmic" evidence="5">
    <location>
        <begin position="728"/>
        <end position="931"/>
    </location>
</feature>
<feature type="repeat" description="ANK 1" evidence="3">
    <location>
        <begin position="131"/>
        <end position="160"/>
    </location>
</feature>
<feature type="repeat" description="ANK 2" evidence="3">
    <location>
        <begin position="162"/>
        <end position="188"/>
    </location>
</feature>
<feature type="repeat" description="ANK 3" evidence="3">
    <location>
        <begin position="217"/>
        <end position="246"/>
    </location>
</feature>
<feature type="repeat" description="ANK 4" evidence="3">
    <location>
        <begin position="618"/>
        <end position="647"/>
    </location>
</feature>
<feature type="region of interest" description="Disordered" evidence="4">
    <location>
        <begin position="1"/>
        <end position="24"/>
    </location>
</feature>
<feature type="compositionally biased region" description="Low complexity" evidence="4">
    <location>
        <begin position="13"/>
        <end position="24"/>
    </location>
</feature>
<feature type="modified residue" description="Phosphoserine" evidence="2">
    <location>
        <position position="815"/>
    </location>
</feature>
<feature type="glycosylation site" description="N-linked (GlcNAc...) asparagine" evidence="3">
    <location>
        <position position="617"/>
    </location>
</feature>
<organism>
    <name type="scientific">Bos taurus</name>
    <name type="common">Bovine</name>
    <dbReference type="NCBI Taxonomy" id="9913"/>
    <lineage>
        <taxon>Eukaryota</taxon>
        <taxon>Metazoa</taxon>
        <taxon>Chordata</taxon>
        <taxon>Craniata</taxon>
        <taxon>Vertebrata</taxon>
        <taxon>Euteleostomi</taxon>
        <taxon>Mammalia</taxon>
        <taxon>Eutheria</taxon>
        <taxon>Laurasiatheria</taxon>
        <taxon>Artiodactyla</taxon>
        <taxon>Ruminantia</taxon>
        <taxon>Pecora</taxon>
        <taxon>Bovidae</taxon>
        <taxon>Bovinae</taxon>
        <taxon>Bos</taxon>
    </lineage>
</organism>
<keyword id="KW-0040">ANK repeat</keyword>
<keyword id="KW-0106">Calcium</keyword>
<keyword id="KW-0107">Calcium channel</keyword>
<keyword id="KW-0109">Calcium transport</keyword>
<keyword id="KW-1003">Cell membrane</keyword>
<keyword id="KW-0325">Glycoprotein</keyword>
<keyword id="KW-0407">Ion channel</keyword>
<keyword id="KW-0406">Ion transport</keyword>
<keyword id="KW-0472">Membrane</keyword>
<keyword id="KW-0597">Phosphoprotein</keyword>
<keyword id="KW-1185">Reference proteome</keyword>
<keyword id="KW-0677">Repeat</keyword>
<keyword id="KW-0812">Transmembrane</keyword>
<keyword id="KW-1133">Transmembrane helix</keyword>
<keyword id="KW-0813">Transport</keyword>
<dbReference type="EMBL" id="DAAA02039923">
    <property type="status" value="NOT_ANNOTATED_CDS"/>
    <property type="molecule type" value="Genomic_DNA"/>
</dbReference>
<dbReference type="EMBL" id="DAAA02039924">
    <property type="status" value="NOT_ANNOTATED_CDS"/>
    <property type="molecule type" value="Genomic_DNA"/>
</dbReference>
<dbReference type="EMBL" id="DAAA02039925">
    <property type="status" value="NOT_ANNOTATED_CDS"/>
    <property type="molecule type" value="Genomic_DNA"/>
</dbReference>
<dbReference type="EMBL" id="AJ271069">
    <property type="protein sequence ID" value="CAC01677.1"/>
    <property type="molecule type" value="mRNA"/>
</dbReference>
<dbReference type="RefSeq" id="NP_001160044.1">
    <property type="nucleotide sequence ID" value="NM_001166572.1"/>
</dbReference>
<dbReference type="RefSeq" id="XP_015330068.1">
    <property type="nucleotide sequence ID" value="XM_015474582.1"/>
</dbReference>
<dbReference type="SMR" id="Q9MYW0"/>
<dbReference type="FunCoup" id="Q9MYW0">
    <property type="interactions" value="77"/>
</dbReference>
<dbReference type="IntAct" id="Q9MYW0">
    <property type="interactions" value="1"/>
</dbReference>
<dbReference type="STRING" id="9913.ENSBTAP00000053428"/>
<dbReference type="GlyCosmos" id="Q9MYW0">
    <property type="glycosylation" value="1 site, No reported glycans"/>
</dbReference>
<dbReference type="GlyGen" id="Q9MYW0">
    <property type="glycosylation" value="1 site"/>
</dbReference>
<dbReference type="PaxDb" id="9913-ENSBTAP00000053428"/>
<dbReference type="Ensembl" id="ENSBTAT00000061311.4">
    <property type="protein sequence ID" value="ENSBTAP00000053428.3"/>
    <property type="gene ID" value="ENSBTAG00000011227.8"/>
</dbReference>
<dbReference type="GeneID" id="407151"/>
<dbReference type="KEGG" id="bta:407151"/>
<dbReference type="CTD" id="7225"/>
<dbReference type="VEuPathDB" id="HostDB:ENSBTAG00000011227"/>
<dbReference type="VGNC" id="VGNC:36386">
    <property type="gene designation" value="TRPC6"/>
</dbReference>
<dbReference type="eggNOG" id="KOG3609">
    <property type="taxonomic scope" value="Eukaryota"/>
</dbReference>
<dbReference type="GeneTree" id="ENSGT01060000248588"/>
<dbReference type="HOGENOM" id="CLU_005716_4_2_1"/>
<dbReference type="InParanoid" id="Q9MYW0"/>
<dbReference type="OMA" id="LLEPWNM"/>
<dbReference type="OrthoDB" id="2373987at2759"/>
<dbReference type="TreeFam" id="TF313147"/>
<dbReference type="Reactome" id="R-BTA-114508">
    <property type="pathway name" value="Effects of PIP2 hydrolysis"/>
</dbReference>
<dbReference type="Reactome" id="R-BTA-139853">
    <property type="pathway name" value="Elevation of cytosolic Ca2+ levels"/>
</dbReference>
<dbReference type="Reactome" id="R-BTA-3295583">
    <property type="pathway name" value="TRP channels"/>
</dbReference>
<dbReference type="Proteomes" id="UP000009136">
    <property type="component" value="Chromosome 15"/>
</dbReference>
<dbReference type="Bgee" id="ENSBTAG00000011227">
    <property type="expression patterns" value="Expressed in neutrophil and 90 other cell types or tissues"/>
</dbReference>
<dbReference type="GO" id="GO:0034703">
    <property type="term" value="C:cation channel complex"/>
    <property type="evidence" value="ECO:0000318"/>
    <property type="project" value="GO_Central"/>
</dbReference>
<dbReference type="GO" id="GO:0005737">
    <property type="term" value="C:cytoplasm"/>
    <property type="evidence" value="ECO:0007669"/>
    <property type="project" value="Ensembl"/>
</dbReference>
<dbReference type="GO" id="GO:0005886">
    <property type="term" value="C:plasma membrane"/>
    <property type="evidence" value="ECO:0000250"/>
    <property type="project" value="UniProtKB"/>
</dbReference>
<dbReference type="GO" id="GO:0036057">
    <property type="term" value="C:slit diaphragm"/>
    <property type="evidence" value="ECO:0007669"/>
    <property type="project" value="Ensembl"/>
</dbReference>
<dbReference type="GO" id="GO:0070679">
    <property type="term" value="F:inositol 1,4,5 trisphosphate binding"/>
    <property type="evidence" value="ECO:0000318"/>
    <property type="project" value="GO_Central"/>
</dbReference>
<dbReference type="GO" id="GO:0005261">
    <property type="term" value="F:monoatomic cation channel activity"/>
    <property type="evidence" value="ECO:0000250"/>
    <property type="project" value="UniProtKB"/>
</dbReference>
<dbReference type="GO" id="GO:0042803">
    <property type="term" value="F:protein homodimerization activity"/>
    <property type="evidence" value="ECO:0000250"/>
    <property type="project" value="UniProtKB"/>
</dbReference>
<dbReference type="GO" id="GO:0015279">
    <property type="term" value="F:store-operated calcium channel activity"/>
    <property type="evidence" value="ECO:0000318"/>
    <property type="project" value="GO_Central"/>
</dbReference>
<dbReference type="GO" id="GO:0070588">
    <property type="term" value="P:calcium ion transmembrane transport"/>
    <property type="evidence" value="ECO:0000318"/>
    <property type="project" value="GO_Central"/>
</dbReference>
<dbReference type="GO" id="GO:0051928">
    <property type="term" value="P:positive regulation of calcium ion transport"/>
    <property type="evidence" value="ECO:0007669"/>
    <property type="project" value="Ensembl"/>
</dbReference>
<dbReference type="GO" id="GO:0007204">
    <property type="term" value="P:positive regulation of cytosolic calcium ion concentration"/>
    <property type="evidence" value="ECO:0007669"/>
    <property type="project" value="Ensembl"/>
</dbReference>
<dbReference type="GO" id="GO:0051480">
    <property type="term" value="P:regulation of cytosolic calcium ion concentration"/>
    <property type="evidence" value="ECO:0000318"/>
    <property type="project" value="GO_Central"/>
</dbReference>
<dbReference type="GO" id="GO:0007338">
    <property type="term" value="P:single fertilization"/>
    <property type="evidence" value="ECO:0000318"/>
    <property type="project" value="GO_Central"/>
</dbReference>
<dbReference type="FunFam" id="1.25.40.20:FF:000157">
    <property type="entry name" value="short transient receptor potential channel 6 isoform X1"/>
    <property type="match status" value="1"/>
</dbReference>
<dbReference type="FunFam" id="1.10.287.70:FF:000041">
    <property type="entry name" value="Transient receptor potential cation channel subfamily C member 7"/>
    <property type="match status" value="1"/>
</dbReference>
<dbReference type="Gene3D" id="1.10.287.70">
    <property type="match status" value="1"/>
</dbReference>
<dbReference type="Gene3D" id="1.25.40.20">
    <property type="entry name" value="Ankyrin repeat-containing domain"/>
    <property type="match status" value="1"/>
</dbReference>
<dbReference type="InterPro" id="IPR002110">
    <property type="entry name" value="Ankyrin_rpt"/>
</dbReference>
<dbReference type="InterPro" id="IPR036770">
    <property type="entry name" value="Ankyrin_rpt-contain_sf"/>
</dbReference>
<dbReference type="InterPro" id="IPR005821">
    <property type="entry name" value="Ion_trans_dom"/>
</dbReference>
<dbReference type="InterPro" id="IPR013555">
    <property type="entry name" value="TRP_dom"/>
</dbReference>
<dbReference type="InterPro" id="IPR005462">
    <property type="entry name" value="TRPC6_channel"/>
</dbReference>
<dbReference type="InterPro" id="IPR002153">
    <property type="entry name" value="TRPC_channel"/>
</dbReference>
<dbReference type="NCBIfam" id="TIGR00870">
    <property type="entry name" value="trp"/>
    <property type="match status" value="1"/>
</dbReference>
<dbReference type="PANTHER" id="PTHR10117:SF7">
    <property type="entry name" value="SHORT TRANSIENT RECEPTOR POTENTIAL CHANNEL 6"/>
    <property type="match status" value="1"/>
</dbReference>
<dbReference type="PANTHER" id="PTHR10117">
    <property type="entry name" value="TRANSIENT RECEPTOR POTENTIAL CHANNEL"/>
    <property type="match status" value="1"/>
</dbReference>
<dbReference type="Pfam" id="PF12796">
    <property type="entry name" value="Ank_2"/>
    <property type="match status" value="1"/>
</dbReference>
<dbReference type="Pfam" id="PF00520">
    <property type="entry name" value="Ion_trans"/>
    <property type="match status" value="1"/>
</dbReference>
<dbReference type="Pfam" id="PF08344">
    <property type="entry name" value="TRP_2"/>
    <property type="match status" value="1"/>
</dbReference>
<dbReference type="PRINTS" id="PR01097">
    <property type="entry name" value="TRNSRECEPTRP"/>
</dbReference>
<dbReference type="PRINTS" id="PR01647">
    <property type="entry name" value="TRPCHANNEL6"/>
</dbReference>
<dbReference type="SMART" id="SM00248">
    <property type="entry name" value="ANK"/>
    <property type="match status" value="3"/>
</dbReference>
<dbReference type="SMART" id="SM01420">
    <property type="entry name" value="TRP_2"/>
    <property type="match status" value="1"/>
</dbReference>
<dbReference type="SUPFAM" id="SSF48403">
    <property type="entry name" value="Ankyrin repeat"/>
    <property type="match status" value="1"/>
</dbReference>
<dbReference type="PROSITE" id="PS50297">
    <property type="entry name" value="ANK_REP_REGION"/>
    <property type="match status" value="2"/>
</dbReference>
<dbReference type="PROSITE" id="PS50088">
    <property type="entry name" value="ANK_REPEAT"/>
    <property type="match status" value="1"/>
</dbReference>
<gene>
    <name evidence="2" type="primary">TRPC6</name>
    <name evidence="2" type="synonym">TRP6</name>
</gene>
<accession>Q9MYW0</accession>
<accession>F1MND4</accession>
<comment type="function">
    <text evidence="2">Thought to form a receptor-activated non-selective calcium permeant cation channel. Probably is operated by a phosphatidylinositol second messenger system activated by receptor tyrosine kinases or G-protein coupled receptors. Activated by diacylglycerol (DAG) in a membrane-delimited fashion, independently of protein kinase C. Seems not to be activated by intracellular calcium store depletion.</text>
</comment>
<comment type="catalytic activity">
    <reaction evidence="2">
        <text>Ca(2+)(in) = Ca(2+)(out)</text>
        <dbReference type="Rhea" id="RHEA:29671"/>
        <dbReference type="ChEBI" id="CHEBI:29108"/>
    </reaction>
</comment>
<comment type="subunit">
    <text evidence="2">Homodimer; forms channel complex. Interacts with MX1 and RNF24.</text>
</comment>
<comment type="subcellular location">
    <subcellularLocation>
        <location evidence="2">Cell membrane</location>
        <topology evidence="3">Multi-pass membrane protein</topology>
    </subcellularLocation>
</comment>
<comment type="PTM">
    <text evidence="1">Phosphorylated by FYN, leading to an increase of TRPC6 channel activity.</text>
</comment>
<comment type="similarity">
    <text evidence="5">Belongs to the transient receptor (TC 1.A.4) family. STrpC subfamily. TRPC6 sub-subfamily.</text>
</comment>
<sequence>MNQSPAAFGPRRGGSPAVVAGAGARRNESQDYLLMDSELGDDAQPPLPAYGYYPCLRGTDSRLTHRRQTVLREKGRRLANRGPAYMFNDHSTSLSIEEERFLDAAEYGNIPVVRKMLEECLSLNVNCVDYMGQNALQLAVANEHLEITELLLKKENLSRVGDALLLAISKGYVRIVEAILSHPAFAEGKRLATSPSQSELQQDDFYAYDEDGTRFSHDVTPIILAAHCQEYEIVHTLLRKGARIERPHDYFCKCSECNQKQKHDSFSHSRSRINAYKGLASPAYLSLSSEDPVMTALELSNELAVLANIEKEFKNDYKKLSMQCKDFVVGLLDLCRNTEEVEAILNGDVEIHHSGGDHYRPNLSRLKLAIKYDVKKFVAHPNCQQQLLSIWYENLSGLRQQTMAVKFLVVLAVAVGLPFLALVYWFAPCSKMGKIMRGPFMKFVAHAASFTIFLGLLVMNAADRFEGTKILPNETSTDHAKQLFRMKTSCFSWMEMLIISWVIGMIWAECKEIWTQGPKEYLFELWNMLDFGMLAIFAASFIARFMAFWHASKAQSIIDANDTLKDLTKVTLGDNVKYYNLARIKWDPSDPQIISEGLYAIAVVLSFSRIAYILPANESFGPLQISLGRTVKDIFKFMVIFIMVFVAFMIGMFNLYSYYIGAKQNEAFTTVEESFKTLFWAIFGLSEVKSVVINYNHKFIENIGYVLYGVYNVTMVIVLLNMLIAMINSSFQEIEDDADVEWKFARAKLWFSYFEEGRTLPVPFNLVPSPKSLFYLLLRLKKWISELFQGHKKGFQEDAEMNKRNEGKKFGILGSHEDLSKLSLDRKQFAHSKQSSIRSSEDFQLNSFTNPPRQYQKIMKRLIKRYVLQAQIDKESDEVNEGELKEIKQDISSLRYELLEEKTQNSEDLAELIRKLGEKLSMEPNQEESNR</sequence>
<reference key="1">
    <citation type="journal article" date="2009" name="Genome Biol.">
        <title>A whole-genome assembly of the domestic cow, Bos taurus.</title>
        <authorList>
            <person name="Zimin A.V."/>
            <person name="Delcher A.L."/>
            <person name="Florea L."/>
            <person name="Kelley D.R."/>
            <person name="Schatz M.C."/>
            <person name="Puiu D."/>
            <person name="Hanrahan F."/>
            <person name="Pertea G."/>
            <person name="Van Tassell C.P."/>
            <person name="Sonstegard T.S."/>
            <person name="Marcais G."/>
            <person name="Roberts M."/>
            <person name="Subramanian P."/>
            <person name="Yorke J.A."/>
            <person name="Salzberg S.L."/>
        </authorList>
    </citation>
    <scope>NUCLEOTIDE SEQUENCE [LARGE SCALE GENOMIC DNA]</scope>
    <source>
        <strain>Hereford</strain>
    </source>
</reference>
<reference key="2">
    <citation type="journal article" date="2000" name="J. Biol. Chem.">
        <title>TRP4 (CCE1) protein is part of native calcium release-activated Ca2+-like channels in adrenal cells.</title>
        <authorList>
            <person name="Philipp S."/>
            <person name="Trost C."/>
            <person name="Warnat J."/>
            <person name="Rautmann J."/>
            <person name="Himmerkus N."/>
            <person name="Schroth G."/>
            <person name="Kretz O."/>
            <person name="Nastainczyk W."/>
            <person name="Cavalie A."/>
            <person name="Hoth M."/>
            <person name="Flockerzi V."/>
        </authorList>
    </citation>
    <scope>NUCLEOTIDE SEQUENCE [MRNA] OF 640-728</scope>
    <source>
        <tissue>Brain</tissue>
    </source>
</reference>